<protein>
    <recommendedName>
        <fullName>Leu/Ile/Val-binding protein homolog 1</fullName>
    </recommendedName>
</protein>
<comment type="function">
    <text evidence="2">Component of an amino-acid transport system.</text>
</comment>
<comment type="similarity">
    <text evidence="2">Belongs to the leucine-binding protein family.</text>
</comment>
<keyword id="KW-0029">Amino-acid transport</keyword>
<keyword id="KW-0732">Signal</keyword>
<keyword id="KW-0813">Transport</keyword>
<sequence>MRKTLFSGVALAAVIAFGGSAWADVLVGIGIPVTGPNAVYGAQIQKGAEAAIKEVNDAGGINGEKIAITIGDDVSDPKQGISVANKFAADGVKFVIGHFNSGVTIPASQVYAENGILEISPGATNPQYTEQGLWNTFRTCGRDDQQGTVAGQYIFDHFKDAKIAVIHDKTPYGQGLADETKKKLNELGTKETLYEGVNVGEKDFSALIAKLKQAGVNVVYWGGLHPEAGLIIRQMADQGLKAQFISGDGIVSNELASIAGPAVEGTLNTFGPDPRNNPDNAELVKKFRDAGFEPEAYTLYSYAAVQSLAQAAKAAGSNDPQEVAKAMKEKGPFKTVLGDLSYDEKGDPKLPGYVMYKWEKGADGKYNYIQQ</sequence>
<evidence type="ECO:0000255" key="1"/>
<evidence type="ECO:0000305" key="2"/>
<gene>
    <name type="ordered locus">BR1785</name>
    <name type="ordered locus">BS1330_I1779</name>
</gene>
<feature type="signal peptide" evidence="1">
    <location>
        <begin position="1"/>
        <end position="23"/>
    </location>
</feature>
<feature type="chain" id="PRO_0000282523" description="Leu/Ile/Val-binding protein homolog 1">
    <location>
        <begin position="24"/>
        <end position="371"/>
    </location>
</feature>
<reference key="1">
    <citation type="journal article" date="2002" name="Proc. Natl. Acad. Sci. U.S.A.">
        <title>The Brucella suis genome reveals fundamental similarities between animal and plant pathogens and symbionts.</title>
        <authorList>
            <person name="Paulsen I.T."/>
            <person name="Seshadri R."/>
            <person name="Nelson K.E."/>
            <person name="Eisen J.A."/>
            <person name="Heidelberg J.F."/>
            <person name="Read T.D."/>
            <person name="Dodson R.J."/>
            <person name="Umayam L.A."/>
            <person name="Brinkac L.M."/>
            <person name="Beanan M.J."/>
            <person name="Daugherty S.C."/>
            <person name="DeBoy R.T."/>
            <person name="Durkin A.S."/>
            <person name="Kolonay J.F."/>
            <person name="Madupu R."/>
            <person name="Nelson W.C."/>
            <person name="Ayodeji B."/>
            <person name="Kraul M."/>
            <person name="Shetty J."/>
            <person name="Malek J.A."/>
            <person name="Van Aken S.E."/>
            <person name="Riedmuller S."/>
            <person name="Tettelin H."/>
            <person name="Gill S.R."/>
            <person name="White O."/>
            <person name="Salzberg S.L."/>
            <person name="Hoover D.L."/>
            <person name="Lindler L.E."/>
            <person name="Halling S.M."/>
            <person name="Boyle S.M."/>
            <person name="Fraser C.M."/>
        </authorList>
    </citation>
    <scope>NUCLEOTIDE SEQUENCE [LARGE SCALE GENOMIC DNA]</scope>
    <source>
        <strain>1330</strain>
    </source>
</reference>
<reference key="2">
    <citation type="journal article" date="2011" name="J. Bacteriol.">
        <title>Revised genome sequence of Brucella suis 1330.</title>
        <authorList>
            <person name="Tae H."/>
            <person name="Shallom S."/>
            <person name="Settlage R."/>
            <person name="Preston D."/>
            <person name="Adams L.G."/>
            <person name="Garner H.R."/>
        </authorList>
    </citation>
    <scope>NUCLEOTIDE SEQUENCE [LARGE SCALE GENOMIC DNA]</scope>
    <source>
        <strain>1330</strain>
    </source>
</reference>
<organism>
    <name type="scientific">Brucella suis biovar 1 (strain 1330)</name>
    <dbReference type="NCBI Taxonomy" id="204722"/>
    <lineage>
        <taxon>Bacteria</taxon>
        <taxon>Pseudomonadati</taxon>
        <taxon>Pseudomonadota</taxon>
        <taxon>Alphaproteobacteria</taxon>
        <taxon>Hyphomicrobiales</taxon>
        <taxon>Brucellaceae</taxon>
        <taxon>Brucella/Ochrobactrum group</taxon>
        <taxon>Brucella</taxon>
    </lineage>
</organism>
<proteinExistence type="inferred from homology"/>
<name>LIVB1_BRUSU</name>
<accession>Q8FYS6</accession>
<accession>G0K7C3</accession>
<dbReference type="EMBL" id="AE014291">
    <property type="protein sequence ID" value="AAN30682.1"/>
    <property type="molecule type" value="Genomic_DNA"/>
</dbReference>
<dbReference type="EMBL" id="CP002997">
    <property type="protein sequence ID" value="AEM19099.1"/>
    <property type="molecule type" value="Genomic_DNA"/>
</dbReference>
<dbReference type="RefSeq" id="WP_002964865.1">
    <property type="nucleotide sequence ID" value="NZ_KN046804.1"/>
</dbReference>
<dbReference type="SMR" id="Q8FYS6"/>
<dbReference type="KEGG" id="bms:BR1785"/>
<dbReference type="KEGG" id="bsi:BS1330_I1779"/>
<dbReference type="PATRIC" id="fig|204722.21.peg.1200"/>
<dbReference type="HOGENOM" id="CLU_027128_6_0_5"/>
<dbReference type="PhylomeDB" id="Q8FYS6"/>
<dbReference type="Proteomes" id="UP000007104">
    <property type="component" value="Chromosome I"/>
</dbReference>
<dbReference type="GO" id="GO:0006865">
    <property type="term" value="P:amino acid transport"/>
    <property type="evidence" value="ECO:0007669"/>
    <property type="project" value="UniProtKB-KW"/>
</dbReference>
<dbReference type="CDD" id="cd06342">
    <property type="entry name" value="PBP1_ABC_LIVBP-like"/>
    <property type="match status" value="1"/>
</dbReference>
<dbReference type="Gene3D" id="3.40.50.2300">
    <property type="match status" value="2"/>
</dbReference>
<dbReference type="InterPro" id="IPR028081">
    <property type="entry name" value="Leu-bd"/>
</dbReference>
<dbReference type="InterPro" id="IPR000709">
    <property type="entry name" value="Leu_Ile_Val-bd"/>
</dbReference>
<dbReference type="InterPro" id="IPR028082">
    <property type="entry name" value="Peripla_BP_I"/>
</dbReference>
<dbReference type="PANTHER" id="PTHR47151:SF2">
    <property type="entry name" value="AMINO ACID BINDING PROTEIN"/>
    <property type="match status" value="1"/>
</dbReference>
<dbReference type="PANTHER" id="PTHR47151">
    <property type="entry name" value="LEU/ILE/VAL-BINDING ABC TRANSPORTER SUBUNIT"/>
    <property type="match status" value="1"/>
</dbReference>
<dbReference type="Pfam" id="PF13458">
    <property type="entry name" value="Peripla_BP_6"/>
    <property type="match status" value="1"/>
</dbReference>
<dbReference type="PRINTS" id="PR00337">
    <property type="entry name" value="LEUILEVALBP"/>
</dbReference>
<dbReference type="SUPFAM" id="SSF53822">
    <property type="entry name" value="Periplasmic binding protein-like I"/>
    <property type="match status" value="1"/>
</dbReference>